<protein>
    <recommendedName>
        <fullName evidence="1">Triosephosphate isomerase</fullName>
        <shortName evidence="1">TIM</shortName>
        <shortName evidence="1">TPI</shortName>
        <ecNumber evidence="1">5.3.1.1</ecNumber>
    </recommendedName>
    <alternativeName>
        <fullName evidence="1">Triose-phosphate isomerase</fullName>
    </alternativeName>
</protein>
<gene>
    <name evidence="1" type="primary">tpiA</name>
    <name type="ordered locus">VFMJ11_0197</name>
</gene>
<reference key="1">
    <citation type="submission" date="2008-08" db="EMBL/GenBank/DDBJ databases">
        <title>Complete sequence of Vibrio fischeri strain MJ11.</title>
        <authorList>
            <person name="Mandel M.J."/>
            <person name="Stabb E.V."/>
            <person name="Ruby E.G."/>
            <person name="Ferriera S."/>
            <person name="Johnson J."/>
            <person name="Kravitz S."/>
            <person name="Beeson K."/>
            <person name="Sutton G."/>
            <person name="Rogers Y.-H."/>
            <person name="Friedman R."/>
            <person name="Frazier M."/>
            <person name="Venter J.C."/>
        </authorList>
    </citation>
    <scope>NUCLEOTIDE SEQUENCE [LARGE SCALE GENOMIC DNA]</scope>
    <source>
        <strain>MJ11</strain>
    </source>
</reference>
<name>TPIS_ALIFM</name>
<organism>
    <name type="scientific">Aliivibrio fischeri (strain MJ11)</name>
    <name type="common">Vibrio fischeri</name>
    <dbReference type="NCBI Taxonomy" id="388396"/>
    <lineage>
        <taxon>Bacteria</taxon>
        <taxon>Pseudomonadati</taxon>
        <taxon>Pseudomonadota</taxon>
        <taxon>Gammaproteobacteria</taxon>
        <taxon>Vibrionales</taxon>
        <taxon>Vibrionaceae</taxon>
        <taxon>Aliivibrio</taxon>
    </lineage>
</organism>
<evidence type="ECO:0000255" key="1">
    <source>
        <dbReference type="HAMAP-Rule" id="MF_00147"/>
    </source>
</evidence>
<keyword id="KW-0963">Cytoplasm</keyword>
<keyword id="KW-0312">Gluconeogenesis</keyword>
<keyword id="KW-0324">Glycolysis</keyword>
<keyword id="KW-0413">Isomerase</keyword>
<sequence length="256" mass="26808">MRHPVVMGNWKLNGSKEMVVELLNGLNAELEGVTGVDVAVAPPALFVDLAERTLTEAGSAIILGAQNTDLNNSGAFTGDMSPAMLKEFGATHIIIGHSERREYHNESDEFVAKKFAFLKENGLTPVLCIGESEAQNEAGETVAVCARQIDAVINTQGVDALNGAIIAYEPIWAIGTGKAATAEDAQRIHAQIRAHIAEKSEEVAKNVVIQYGGSVKPENAAAYFAQPDIDGALVGGAALDAKSFAAIAKAAAEAKA</sequence>
<proteinExistence type="inferred from homology"/>
<feature type="chain" id="PRO_1000096547" description="Triosephosphate isomerase">
    <location>
        <begin position="1"/>
        <end position="256"/>
    </location>
</feature>
<feature type="active site" description="Electrophile" evidence="1">
    <location>
        <position position="97"/>
    </location>
</feature>
<feature type="active site" description="Proton acceptor" evidence="1">
    <location>
        <position position="169"/>
    </location>
</feature>
<feature type="binding site" evidence="1">
    <location>
        <begin position="9"/>
        <end position="11"/>
    </location>
    <ligand>
        <name>substrate</name>
    </ligand>
</feature>
<feature type="binding site" evidence="1">
    <location>
        <position position="175"/>
    </location>
    <ligand>
        <name>substrate</name>
    </ligand>
</feature>
<feature type="binding site" evidence="1">
    <location>
        <position position="214"/>
    </location>
    <ligand>
        <name>substrate</name>
    </ligand>
</feature>
<feature type="binding site" evidence="1">
    <location>
        <begin position="235"/>
        <end position="236"/>
    </location>
    <ligand>
        <name>substrate</name>
    </ligand>
</feature>
<dbReference type="EC" id="5.3.1.1" evidence="1"/>
<dbReference type="EMBL" id="CP001139">
    <property type="protein sequence ID" value="ACH65066.1"/>
    <property type="molecule type" value="Genomic_DNA"/>
</dbReference>
<dbReference type="RefSeq" id="WP_011261058.1">
    <property type="nucleotide sequence ID" value="NC_011184.1"/>
</dbReference>
<dbReference type="SMR" id="B5FFY1"/>
<dbReference type="GeneID" id="54162830"/>
<dbReference type="KEGG" id="vfm:VFMJ11_0197"/>
<dbReference type="HOGENOM" id="CLU_024251_2_3_6"/>
<dbReference type="UniPathway" id="UPA00109">
    <property type="reaction ID" value="UER00189"/>
</dbReference>
<dbReference type="UniPathway" id="UPA00138"/>
<dbReference type="Proteomes" id="UP000001857">
    <property type="component" value="Chromosome I"/>
</dbReference>
<dbReference type="GO" id="GO:0005829">
    <property type="term" value="C:cytosol"/>
    <property type="evidence" value="ECO:0007669"/>
    <property type="project" value="TreeGrafter"/>
</dbReference>
<dbReference type="GO" id="GO:0004807">
    <property type="term" value="F:triose-phosphate isomerase activity"/>
    <property type="evidence" value="ECO:0007669"/>
    <property type="project" value="UniProtKB-UniRule"/>
</dbReference>
<dbReference type="GO" id="GO:0006094">
    <property type="term" value="P:gluconeogenesis"/>
    <property type="evidence" value="ECO:0007669"/>
    <property type="project" value="UniProtKB-UniRule"/>
</dbReference>
<dbReference type="GO" id="GO:0046166">
    <property type="term" value="P:glyceraldehyde-3-phosphate biosynthetic process"/>
    <property type="evidence" value="ECO:0007669"/>
    <property type="project" value="TreeGrafter"/>
</dbReference>
<dbReference type="GO" id="GO:0019563">
    <property type="term" value="P:glycerol catabolic process"/>
    <property type="evidence" value="ECO:0007669"/>
    <property type="project" value="TreeGrafter"/>
</dbReference>
<dbReference type="GO" id="GO:0006096">
    <property type="term" value="P:glycolytic process"/>
    <property type="evidence" value="ECO:0007669"/>
    <property type="project" value="UniProtKB-UniRule"/>
</dbReference>
<dbReference type="CDD" id="cd00311">
    <property type="entry name" value="TIM"/>
    <property type="match status" value="1"/>
</dbReference>
<dbReference type="FunFam" id="3.20.20.70:FF:000020">
    <property type="entry name" value="Triosephosphate isomerase"/>
    <property type="match status" value="1"/>
</dbReference>
<dbReference type="Gene3D" id="3.20.20.70">
    <property type="entry name" value="Aldolase class I"/>
    <property type="match status" value="1"/>
</dbReference>
<dbReference type="HAMAP" id="MF_00147_B">
    <property type="entry name" value="TIM_B"/>
    <property type="match status" value="1"/>
</dbReference>
<dbReference type="InterPro" id="IPR013785">
    <property type="entry name" value="Aldolase_TIM"/>
</dbReference>
<dbReference type="InterPro" id="IPR035990">
    <property type="entry name" value="TIM_sf"/>
</dbReference>
<dbReference type="InterPro" id="IPR022896">
    <property type="entry name" value="TrioseP_Isoase_bac/euk"/>
</dbReference>
<dbReference type="InterPro" id="IPR000652">
    <property type="entry name" value="Triosephosphate_isomerase"/>
</dbReference>
<dbReference type="InterPro" id="IPR020861">
    <property type="entry name" value="Triosephosphate_isomerase_AS"/>
</dbReference>
<dbReference type="NCBIfam" id="TIGR00419">
    <property type="entry name" value="tim"/>
    <property type="match status" value="1"/>
</dbReference>
<dbReference type="PANTHER" id="PTHR21139">
    <property type="entry name" value="TRIOSEPHOSPHATE ISOMERASE"/>
    <property type="match status" value="1"/>
</dbReference>
<dbReference type="PANTHER" id="PTHR21139:SF42">
    <property type="entry name" value="TRIOSEPHOSPHATE ISOMERASE"/>
    <property type="match status" value="1"/>
</dbReference>
<dbReference type="Pfam" id="PF00121">
    <property type="entry name" value="TIM"/>
    <property type="match status" value="1"/>
</dbReference>
<dbReference type="SUPFAM" id="SSF51351">
    <property type="entry name" value="Triosephosphate isomerase (TIM)"/>
    <property type="match status" value="1"/>
</dbReference>
<dbReference type="PROSITE" id="PS00171">
    <property type="entry name" value="TIM_1"/>
    <property type="match status" value="1"/>
</dbReference>
<dbReference type="PROSITE" id="PS51440">
    <property type="entry name" value="TIM_2"/>
    <property type="match status" value="1"/>
</dbReference>
<comment type="function">
    <text evidence="1">Involved in the gluconeogenesis. Catalyzes stereospecifically the conversion of dihydroxyacetone phosphate (DHAP) to D-glyceraldehyde-3-phosphate (G3P).</text>
</comment>
<comment type="catalytic activity">
    <reaction evidence="1">
        <text>D-glyceraldehyde 3-phosphate = dihydroxyacetone phosphate</text>
        <dbReference type="Rhea" id="RHEA:18585"/>
        <dbReference type="ChEBI" id="CHEBI:57642"/>
        <dbReference type="ChEBI" id="CHEBI:59776"/>
        <dbReference type="EC" id="5.3.1.1"/>
    </reaction>
</comment>
<comment type="pathway">
    <text evidence="1">Carbohydrate biosynthesis; gluconeogenesis.</text>
</comment>
<comment type="pathway">
    <text evidence="1">Carbohydrate degradation; glycolysis; D-glyceraldehyde 3-phosphate from glycerone phosphate: step 1/1.</text>
</comment>
<comment type="subunit">
    <text evidence="1">Homodimer.</text>
</comment>
<comment type="subcellular location">
    <subcellularLocation>
        <location evidence="1">Cytoplasm</location>
    </subcellularLocation>
</comment>
<comment type="similarity">
    <text evidence="1">Belongs to the triosephosphate isomerase family.</text>
</comment>
<accession>B5FFY1</accession>